<gene>
    <name type="primary">yknW</name>
    <name evidence="4" type="ordered locus">BSU14340</name>
</gene>
<organism>
    <name type="scientific">Bacillus subtilis (strain 168)</name>
    <dbReference type="NCBI Taxonomy" id="224308"/>
    <lineage>
        <taxon>Bacteria</taxon>
        <taxon>Bacillati</taxon>
        <taxon>Bacillota</taxon>
        <taxon>Bacilli</taxon>
        <taxon>Bacillales</taxon>
        <taxon>Bacillaceae</taxon>
        <taxon>Bacillus</taxon>
    </lineage>
</organism>
<comment type="function">
    <text evidence="2">Part of an unusual four-component transporter, which is required for protection against the killing factor SdpC (sporulation-delaying protein). Has a role in the assembly of the YknXYZ complex.</text>
</comment>
<comment type="subunit">
    <text evidence="2">Interacts with a complex composed of YknX, YknY and YknZ.</text>
</comment>
<comment type="subcellular location">
    <subcellularLocation>
        <location evidence="2">Cell membrane</location>
        <topology evidence="1">Multi-pass membrane protein</topology>
    </subcellularLocation>
</comment>
<comment type="induction">
    <text evidence="2">Expressed in exponential-phase cells.</text>
</comment>
<reference key="1">
    <citation type="submission" date="1997-07" db="EMBL/GenBank/DDBJ databases">
        <title>Sequence analysis of the mobA-ampS region of the Bacillus subtilis chromosome.</title>
        <authorList>
            <person name="Caldwell R.M."/>
            <person name="Ferrari E."/>
        </authorList>
    </citation>
    <scope>NUCLEOTIDE SEQUENCE [GENOMIC DNA]</scope>
    <source>
        <strain>168</strain>
    </source>
</reference>
<reference key="2">
    <citation type="journal article" date="1997" name="Nature">
        <title>The complete genome sequence of the Gram-positive bacterium Bacillus subtilis.</title>
        <authorList>
            <person name="Kunst F."/>
            <person name="Ogasawara N."/>
            <person name="Moszer I."/>
            <person name="Albertini A.M."/>
            <person name="Alloni G."/>
            <person name="Azevedo V."/>
            <person name="Bertero M.G."/>
            <person name="Bessieres P."/>
            <person name="Bolotin A."/>
            <person name="Borchert S."/>
            <person name="Borriss R."/>
            <person name="Boursier L."/>
            <person name="Brans A."/>
            <person name="Braun M."/>
            <person name="Brignell S.C."/>
            <person name="Bron S."/>
            <person name="Brouillet S."/>
            <person name="Bruschi C.V."/>
            <person name="Caldwell B."/>
            <person name="Capuano V."/>
            <person name="Carter N.M."/>
            <person name="Choi S.-K."/>
            <person name="Codani J.-J."/>
            <person name="Connerton I.F."/>
            <person name="Cummings N.J."/>
            <person name="Daniel R.A."/>
            <person name="Denizot F."/>
            <person name="Devine K.M."/>
            <person name="Duesterhoeft A."/>
            <person name="Ehrlich S.D."/>
            <person name="Emmerson P.T."/>
            <person name="Entian K.-D."/>
            <person name="Errington J."/>
            <person name="Fabret C."/>
            <person name="Ferrari E."/>
            <person name="Foulger D."/>
            <person name="Fritz C."/>
            <person name="Fujita M."/>
            <person name="Fujita Y."/>
            <person name="Fuma S."/>
            <person name="Galizzi A."/>
            <person name="Galleron N."/>
            <person name="Ghim S.-Y."/>
            <person name="Glaser P."/>
            <person name="Goffeau A."/>
            <person name="Golightly E.J."/>
            <person name="Grandi G."/>
            <person name="Guiseppi G."/>
            <person name="Guy B.J."/>
            <person name="Haga K."/>
            <person name="Haiech J."/>
            <person name="Harwood C.R."/>
            <person name="Henaut A."/>
            <person name="Hilbert H."/>
            <person name="Holsappel S."/>
            <person name="Hosono S."/>
            <person name="Hullo M.-F."/>
            <person name="Itaya M."/>
            <person name="Jones L.-M."/>
            <person name="Joris B."/>
            <person name="Karamata D."/>
            <person name="Kasahara Y."/>
            <person name="Klaerr-Blanchard M."/>
            <person name="Klein C."/>
            <person name="Kobayashi Y."/>
            <person name="Koetter P."/>
            <person name="Koningstein G."/>
            <person name="Krogh S."/>
            <person name="Kumano M."/>
            <person name="Kurita K."/>
            <person name="Lapidus A."/>
            <person name="Lardinois S."/>
            <person name="Lauber J."/>
            <person name="Lazarevic V."/>
            <person name="Lee S.-M."/>
            <person name="Levine A."/>
            <person name="Liu H."/>
            <person name="Masuda S."/>
            <person name="Mauel C."/>
            <person name="Medigue C."/>
            <person name="Medina N."/>
            <person name="Mellado R.P."/>
            <person name="Mizuno M."/>
            <person name="Moestl D."/>
            <person name="Nakai S."/>
            <person name="Noback M."/>
            <person name="Noone D."/>
            <person name="O'Reilly M."/>
            <person name="Ogawa K."/>
            <person name="Ogiwara A."/>
            <person name="Oudega B."/>
            <person name="Park S.-H."/>
            <person name="Parro V."/>
            <person name="Pohl T.M."/>
            <person name="Portetelle D."/>
            <person name="Porwollik S."/>
            <person name="Prescott A.M."/>
            <person name="Presecan E."/>
            <person name="Pujic P."/>
            <person name="Purnelle B."/>
            <person name="Rapoport G."/>
            <person name="Rey M."/>
            <person name="Reynolds S."/>
            <person name="Rieger M."/>
            <person name="Rivolta C."/>
            <person name="Rocha E."/>
            <person name="Roche B."/>
            <person name="Rose M."/>
            <person name="Sadaie Y."/>
            <person name="Sato T."/>
            <person name="Scanlan E."/>
            <person name="Schleich S."/>
            <person name="Schroeter R."/>
            <person name="Scoffone F."/>
            <person name="Sekiguchi J."/>
            <person name="Sekowska A."/>
            <person name="Seror S.J."/>
            <person name="Serror P."/>
            <person name="Shin B.-S."/>
            <person name="Soldo B."/>
            <person name="Sorokin A."/>
            <person name="Tacconi E."/>
            <person name="Takagi T."/>
            <person name="Takahashi H."/>
            <person name="Takemaru K."/>
            <person name="Takeuchi M."/>
            <person name="Tamakoshi A."/>
            <person name="Tanaka T."/>
            <person name="Terpstra P."/>
            <person name="Tognoni A."/>
            <person name="Tosato V."/>
            <person name="Uchiyama S."/>
            <person name="Vandenbol M."/>
            <person name="Vannier F."/>
            <person name="Vassarotti A."/>
            <person name="Viari A."/>
            <person name="Wambutt R."/>
            <person name="Wedler E."/>
            <person name="Wedler H."/>
            <person name="Weitzenegger T."/>
            <person name="Winters P."/>
            <person name="Wipat A."/>
            <person name="Yamamoto H."/>
            <person name="Yamane K."/>
            <person name="Yasumoto K."/>
            <person name="Yata K."/>
            <person name="Yoshida K."/>
            <person name="Yoshikawa H.-F."/>
            <person name="Zumstein E."/>
            <person name="Yoshikawa H."/>
            <person name="Danchin A."/>
        </authorList>
    </citation>
    <scope>NUCLEOTIDE SEQUENCE [LARGE SCALE GENOMIC DNA]</scope>
    <source>
        <strain>168</strain>
    </source>
</reference>
<reference key="3">
    <citation type="journal article" date="2012" name="J. Bacteriol.">
        <title>YknWXYZ is an unusual four-component transporter with a role in protection against sporulation-delaying-protein-induced killing of Bacillus subtilis.</title>
        <authorList>
            <person name="Yamada Y."/>
            <person name="Tikhonova E.B."/>
            <person name="Zgurskaya H.I."/>
        </authorList>
    </citation>
    <scope>FUNCTION</scope>
    <scope>SUBUNIT</scope>
    <scope>SUBCELLULAR LOCATION</scope>
    <scope>INDUCTION</scope>
    <source>
        <strain>168</strain>
    </source>
</reference>
<proteinExistence type="evidence at protein level"/>
<feature type="chain" id="PRO_0000049605" description="Membrane protein YknW">
    <location>
        <begin position="1"/>
        <end position="231"/>
    </location>
</feature>
<feature type="transmembrane region" description="Helical" evidence="1">
    <location>
        <begin position="38"/>
        <end position="58"/>
    </location>
</feature>
<feature type="transmembrane region" description="Helical" evidence="1">
    <location>
        <begin position="93"/>
        <end position="113"/>
    </location>
</feature>
<feature type="transmembrane region" description="Helical" evidence="1">
    <location>
        <begin position="128"/>
        <end position="148"/>
    </location>
</feature>
<feature type="transmembrane region" description="Helical" evidence="1">
    <location>
        <begin position="171"/>
        <end position="191"/>
    </location>
</feature>
<feature type="transmembrane region" description="Helical" evidence="1">
    <location>
        <begin position="205"/>
        <end position="225"/>
    </location>
</feature>
<keyword id="KW-1003">Cell membrane</keyword>
<keyword id="KW-0472">Membrane</keyword>
<keyword id="KW-1185">Reference proteome</keyword>
<keyword id="KW-0812">Transmembrane</keyword>
<keyword id="KW-1133">Transmembrane helix</keyword>
<name>YKNW_BACSU</name>
<dbReference type="EMBL" id="AF012285">
    <property type="protein sequence ID" value="AAC24908.1"/>
    <property type="molecule type" value="Genomic_DNA"/>
</dbReference>
<dbReference type="EMBL" id="AL009126">
    <property type="protein sequence ID" value="CAB13307.1"/>
    <property type="molecule type" value="Genomic_DNA"/>
</dbReference>
<dbReference type="PIR" id="B69858">
    <property type="entry name" value="B69858"/>
</dbReference>
<dbReference type="RefSeq" id="WP_003232360.1">
    <property type="nucleotide sequence ID" value="NZ_OZ025638.1"/>
</dbReference>
<dbReference type="FunCoup" id="O31709">
    <property type="interactions" value="6"/>
</dbReference>
<dbReference type="STRING" id="224308.BSU14340"/>
<dbReference type="TCDB" id="9.B.29.2.17">
    <property type="family name" value="the 4-5 tms putative chaperone (4-5pc) family"/>
</dbReference>
<dbReference type="jPOST" id="O31709"/>
<dbReference type="PaxDb" id="224308-BSU14340"/>
<dbReference type="EnsemblBacteria" id="CAB13307">
    <property type="protein sequence ID" value="CAB13307"/>
    <property type="gene ID" value="BSU_14340"/>
</dbReference>
<dbReference type="GeneID" id="938771"/>
<dbReference type="KEGG" id="bsu:BSU14340"/>
<dbReference type="PATRIC" id="fig|224308.179.peg.1564"/>
<dbReference type="eggNOG" id="ENOG5033CY2">
    <property type="taxonomic scope" value="Bacteria"/>
</dbReference>
<dbReference type="InParanoid" id="O31709"/>
<dbReference type="OrthoDB" id="2940219at2"/>
<dbReference type="BioCyc" id="BSUB:BSU14340-MONOMER"/>
<dbReference type="Proteomes" id="UP000001570">
    <property type="component" value="Chromosome"/>
</dbReference>
<dbReference type="GO" id="GO:0005886">
    <property type="term" value="C:plasma membrane"/>
    <property type="evidence" value="ECO:0007669"/>
    <property type="project" value="UniProtKB-SubCell"/>
</dbReference>
<dbReference type="InterPro" id="IPR006977">
    <property type="entry name" value="Yip1_dom"/>
</dbReference>
<dbReference type="Pfam" id="PF04893">
    <property type="entry name" value="Yip1"/>
    <property type="match status" value="1"/>
</dbReference>
<protein>
    <recommendedName>
        <fullName evidence="3">Membrane protein YknW</fullName>
    </recommendedName>
</protein>
<sequence>METNVEKNSGTATEKPSLFGVITSPSVQFERIRERPAVWGPLLIVAAIIIVGAVLQSLGTDYSELLKSQDTQGLSAEQMETVATITKFGGMAGAIIGGIAALFIAPLIYWLCVKVSGGVTTYKKMLSLSLFVSLISSLGLLVNGIVAFTTDVNPLYSTTSLAGIIPSDGALASVLNTFEIFSIWSFVLLAIGLHKTGGISKKAGWISAIILFGILVVFSLFSGLINSVAGA</sequence>
<accession>O31709</accession>
<evidence type="ECO:0000255" key="1"/>
<evidence type="ECO:0000269" key="2">
    <source>
    </source>
</evidence>
<evidence type="ECO:0000305" key="3"/>
<evidence type="ECO:0000312" key="4">
    <source>
        <dbReference type="EMBL" id="CAB13307.1"/>
    </source>
</evidence>